<feature type="signal peptide" evidence="2">
    <location>
        <begin position="1"/>
        <end position="21"/>
    </location>
</feature>
<feature type="chain" id="PRO_0000016411" description="Interferon kappa">
    <location>
        <begin position="22"/>
        <end position="199"/>
    </location>
</feature>
<feature type="disulfide bond" evidence="1">
    <location>
        <begin position="24"/>
        <end position="119"/>
    </location>
</feature>
<feature type="disulfide bond" evidence="1">
    <location>
        <begin position="49"/>
        <end position="162"/>
    </location>
</feature>
<keyword id="KW-0051">Antiviral defense</keyword>
<keyword id="KW-0202">Cytokine</keyword>
<keyword id="KW-1015">Disulfide bond</keyword>
<keyword id="KW-1185">Reference proteome</keyword>
<keyword id="KW-0964">Secreted</keyword>
<keyword id="KW-0732">Signal</keyword>
<dbReference type="EMBL" id="AF547990">
    <property type="protein sequence ID" value="AAP43908.1"/>
    <property type="molecule type" value="Genomic_DNA"/>
</dbReference>
<dbReference type="CCDS" id="CCDS18037.1"/>
<dbReference type="RefSeq" id="NP_954608.1">
    <property type="nucleotide sequence ID" value="NM_199157.2"/>
</dbReference>
<dbReference type="SMR" id="Q7TSL0"/>
<dbReference type="FunCoup" id="Q7TSL0">
    <property type="interactions" value="681"/>
</dbReference>
<dbReference type="STRING" id="10090.ENSMUSP00000054273"/>
<dbReference type="PhosphoSitePlus" id="Q7TSL0"/>
<dbReference type="PaxDb" id="10090-ENSMUSP00000054273"/>
<dbReference type="ProteomicsDB" id="269380"/>
<dbReference type="Antibodypedia" id="25005">
    <property type="antibodies" value="87 antibodies from 17 providers"/>
</dbReference>
<dbReference type="DNASU" id="387510"/>
<dbReference type="Ensembl" id="ENSMUST00000058595.7">
    <property type="protein sequence ID" value="ENSMUSP00000054273.7"/>
    <property type="gene ID" value="ENSMUSG00000042993.7"/>
</dbReference>
<dbReference type="GeneID" id="387510"/>
<dbReference type="KEGG" id="mmu:387510"/>
<dbReference type="UCSC" id="uc008sgu.1">
    <property type="organism name" value="mouse"/>
</dbReference>
<dbReference type="AGR" id="MGI:2683287"/>
<dbReference type="CTD" id="56832"/>
<dbReference type="MGI" id="MGI:2683287">
    <property type="gene designation" value="Ifnk"/>
</dbReference>
<dbReference type="VEuPathDB" id="HostDB:ENSMUSG00000042993"/>
<dbReference type="eggNOG" id="ENOG502SQGR">
    <property type="taxonomic scope" value="Eukaryota"/>
</dbReference>
<dbReference type="GeneTree" id="ENSGT01000000214430"/>
<dbReference type="HOGENOM" id="CLU_109427_1_0_1"/>
<dbReference type="InParanoid" id="Q7TSL0"/>
<dbReference type="OMA" id="KYSFCAW"/>
<dbReference type="OrthoDB" id="8922121at2759"/>
<dbReference type="PhylomeDB" id="Q7TSL0"/>
<dbReference type="TreeFam" id="TF336177"/>
<dbReference type="BioGRID-ORCS" id="387510">
    <property type="hits" value="1 hit in 80 CRISPR screens"/>
</dbReference>
<dbReference type="PRO" id="PR:Q7TSL0"/>
<dbReference type="Proteomes" id="UP000000589">
    <property type="component" value="Chromosome 4"/>
</dbReference>
<dbReference type="RNAct" id="Q7TSL0">
    <property type="molecule type" value="protein"/>
</dbReference>
<dbReference type="Bgee" id="ENSMUSG00000042993">
    <property type="expression patterns" value="Expressed in ectoplacental cone and 19 other cell types or tissues"/>
</dbReference>
<dbReference type="ExpressionAtlas" id="Q7TSL0">
    <property type="expression patterns" value="baseline and differential"/>
</dbReference>
<dbReference type="GO" id="GO:0005615">
    <property type="term" value="C:extracellular space"/>
    <property type="evidence" value="ECO:0007669"/>
    <property type="project" value="UniProtKB-KW"/>
</dbReference>
<dbReference type="GO" id="GO:0005125">
    <property type="term" value="F:cytokine activity"/>
    <property type="evidence" value="ECO:0007669"/>
    <property type="project" value="UniProtKB-KW"/>
</dbReference>
<dbReference type="GO" id="GO:0005126">
    <property type="term" value="F:cytokine receptor binding"/>
    <property type="evidence" value="ECO:0007669"/>
    <property type="project" value="InterPro"/>
</dbReference>
<dbReference type="GO" id="GO:0051607">
    <property type="term" value="P:defense response to virus"/>
    <property type="evidence" value="ECO:0007669"/>
    <property type="project" value="UniProtKB-KW"/>
</dbReference>
<dbReference type="FunFam" id="1.20.1250.10:FF:000083">
    <property type="entry name" value="Interferon kappa"/>
    <property type="match status" value="1"/>
</dbReference>
<dbReference type="Gene3D" id="1.20.1250.10">
    <property type="match status" value="1"/>
</dbReference>
<dbReference type="InterPro" id="IPR009079">
    <property type="entry name" value="4_helix_cytokine-like_core"/>
</dbReference>
<dbReference type="InterPro" id="IPR000471">
    <property type="entry name" value="Interferon_alpha/beta/delta"/>
</dbReference>
<dbReference type="PANTHER" id="PTHR11691:SF6">
    <property type="entry name" value="INTERFERON KAPPA"/>
    <property type="match status" value="1"/>
</dbReference>
<dbReference type="PANTHER" id="PTHR11691">
    <property type="entry name" value="TYPE I INTERFERON"/>
    <property type="match status" value="1"/>
</dbReference>
<dbReference type="Pfam" id="PF00143">
    <property type="entry name" value="Interferon"/>
    <property type="match status" value="1"/>
</dbReference>
<dbReference type="PRINTS" id="PR00266">
    <property type="entry name" value="INTERFERONAB"/>
</dbReference>
<dbReference type="SMART" id="SM00076">
    <property type="entry name" value="IFabd"/>
    <property type="match status" value="1"/>
</dbReference>
<dbReference type="SUPFAM" id="SSF47266">
    <property type="entry name" value="4-helical cytokines"/>
    <property type="match status" value="1"/>
</dbReference>
<dbReference type="PROSITE" id="PS00252">
    <property type="entry name" value="INTERFERON_A_B_D"/>
    <property type="match status" value="1"/>
</dbReference>
<organism>
    <name type="scientific">Mus musculus</name>
    <name type="common">Mouse</name>
    <dbReference type="NCBI Taxonomy" id="10090"/>
    <lineage>
        <taxon>Eukaryota</taxon>
        <taxon>Metazoa</taxon>
        <taxon>Chordata</taxon>
        <taxon>Craniata</taxon>
        <taxon>Vertebrata</taxon>
        <taxon>Euteleostomi</taxon>
        <taxon>Mammalia</taxon>
        <taxon>Eutheria</taxon>
        <taxon>Euarchontoglires</taxon>
        <taxon>Glires</taxon>
        <taxon>Rodentia</taxon>
        <taxon>Myomorpha</taxon>
        <taxon>Muroidea</taxon>
        <taxon>Muridae</taxon>
        <taxon>Murinae</taxon>
        <taxon>Mus</taxon>
        <taxon>Mus</taxon>
    </lineage>
</organism>
<accession>Q7TSL0</accession>
<gene>
    <name type="primary">Ifnk</name>
</gene>
<name>IFNK_MOUSE</name>
<protein>
    <recommendedName>
        <fullName>Interferon kappa</fullName>
        <shortName>IFN-kappa</shortName>
    </recommendedName>
</protein>
<reference key="1">
    <citation type="journal article" date="2003" name="J. Immunol.">
        <title>Expression of a novel murine type I IFN in the pancreatic islets induces diabetes in mice.</title>
        <authorList>
            <person name="Vassileva G."/>
            <person name="Chen S.-C."/>
            <person name="Zeng M."/>
            <person name="Abbondanzo S."/>
            <person name="Jensen K."/>
            <person name="Gorman D."/>
            <person name="Baroudy B.M."/>
            <person name="Jiang Y."/>
            <person name="Murgolo N."/>
            <person name="Lira S.A."/>
        </authorList>
    </citation>
    <scope>NUCLEOTIDE SEQUENCE [GENOMIC DNA]</scope>
    <scope>TISSUE SPECIFICITY</scope>
    <scope>INDUCTION</scope>
    <source>
        <strain>129/Sv</strain>
    </source>
</reference>
<evidence type="ECO:0000250" key="1"/>
<evidence type="ECO:0000255" key="2"/>
<evidence type="ECO:0000269" key="3">
    <source>
    </source>
</evidence>
<evidence type="ECO:0000305" key="4"/>
<comment type="function">
    <text>May play a role in the regulation of immune cell function.</text>
</comment>
<comment type="subcellular location">
    <subcellularLocation>
        <location evidence="1">Secreted</location>
    </subcellularLocation>
</comment>
<comment type="tissue specificity">
    <text evidence="3">Expressed at low levels in peritoneal macrophages.</text>
</comment>
<comment type="induction">
    <text evidence="3">Upon exposure to double-stranded RNA and interferon-gamma.</text>
</comment>
<comment type="miscellaneous">
    <text>Transgenic mice overexpressing IFNK in the pancreas, develop insulin-dependent (type I) diabete.</text>
</comment>
<comment type="similarity">
    <text evidence="4">Belongs to the alpha/beta interferon family.</text>
</comment>
<sequence>MTPKFLWLVALVALYIPPIQSLNCVYLDDSILENVKLLGSTMTGFPLRCLKDITDFKFPKEILPYIQHMKREINAVSYRISSLALTIFNLKGSIPPVTEEHWERIRSGLFKQVRQAQECFMDEEKENREHPHSEDFLTVYLELGKYFFRIKKFLINKKYSFCAWKIVTVEIRRCFIIFSKSRKLLKMISESPTFKQELK</sequence>
<proteinExistence type="evidence at transcript level"/>